<name>NSK1_SARBU</name>
<keyword id="KW-0027">Amidation</keyword>
<keyword id="KW-0903">Direct protein sequencing</keyword>
<keyword id="KW-0527">Neuropeptide</keyword>
<keyword id="KW-0964">Secreted</keyword>
<keyword id="KW-0765">Sulfation</keyword>
<feature type="peptide" id="PRO_0000043896" description="Neosulfakinin-1">
    <location>
        <begin position="1"/>
        <end position="9"/>
    </location>
</feature>
<feature type="modified residue" description="Sulfotyrosine" evidence="1">
    <location>
        <position position="4"/>
    </location>
</feature>
<feature type="modified residue" description="Phenylalanine amide" evidence="1">
    <location>
        <position position="9"/>
    </location>
</feature>
<sequence>FDDYGHMRF</sequence>
<accession>P41492</accession>
<evidence type="ECO:0000255" key="1"/>
<evidence type="ECO:0000305" key="2"/>
<protein>
    <recommendedName>
        <fullName>Neosulfakinin-1</fullName>
    </recommendedName>
    <alternativeName>
        <fullName>Neosulfakinin-I</fullName>
        <shortName>Neb-SK-I</shortName>
    </alternativeName>
</protein>
<dbReference type="GO" id="GO:0005576">
    <property type="term" value="C:extracellular region"/>
    <property type="evidence" value="ECO:0007669"/>
    <property type="project" value="UniProtKB-SubCell"/>
</dbReference>
<dbReference type="GO" id="GO:0007218">
    <property type="term" value="P:neuropeptide signaling pathway"/>
    <property type="evidence" value="ECO:0007669"/>
    <property type="project" value="UniProtKB-KW"/>
</dbReference>
<dbReference type="InterPro" id="IPR013152">
    <property type="entry name" value="Gastrin/cholecystokinin_CS"/>
</dbReference>
<dbReference type="InterPro" id="IPR013259">
    <property type="entry name" value="Sulfakinin"/>
</dbReference>
<dbReference type="Pfam" id="PF08257">
    <property type="entry name" value="Sulfakinin"/>
    <property type="match status" value="1"/>
</dbReference>
<dbReference type="PROSITE" id="PS00259">
    <property type="entry name" value="GASTRIN"/>
    <property type="match status" value="1"/>
</dbReference>
<reference key="1">
    <citation type="journal article" date="1992" name="Comp. Biochem. Physiol.">
        <title>Isolation and primary structure of two sulfakinin-like peptides from the fleshfly, Neobellieria bullata.</title>
        <authorList>
            <person name="Fonagy A."/>
            <person name="Schoofs L."/>
            <person name="Proost P."/>
            <person name="van Damme J."/>
            <person name="de Loof A."/>
        </authorList>
    </citation>
    <scope>PROTEIN SEQUENCE</scope>
    <source>
        <tissue>Head</tissue>
    </source>
</reference>
<proteinExistence type="evidence at protein level"/>
<organism>
    <name type="scientific">Sarcophaga bullata</name>
    <name type="common">Grey flesh fly</name>
    <name type="synonym">Neobellieria bullata</name>
    <dbReference type="NCBI Taxonomy" id="7385"/>
    <lineage>
        <taxon>Eukaryota</taxon>
        <taxon>Metazoa</taxon>
        <taxon>Ecdysozoa</taxon>
        <taxon>Arthropoda</taxon>
        <taxon>Hexapoda</taxon>
        <taxon>Insecta</taxon>
        <taxon>Pterygota</taxon>
        <taxon>Neoptera</taxon>
        <taxon>Endopterygota</taxon>
        <taxon>Diptera</taxon>
        <taxon>Brachycera</taxon>
        <taxon>Muscomorpha</taxon>
        <taxon>Oestroidea</taxon>
        <taxon>Sarcophagidae</taxon>
        <taxon>Sarcophaga</taxon>
        <taxon>Neobellieria</taxon>
    </lineage>
</organism>
<comment type="function">
    <text>Myotropic peptide.</text>
</comment>
<comment type="subcellular location">
    <subcellularLocation>
        <location>Secreted</location>
    </subcellularLocation>
</comment>
<comment type="similarity">
    <text evidence="2">Belongs to the gastrin/cholecystokinin family.</text>
</comment>